<organism>
    <name type="scientific">Arabidopsis thaliana</name>
    <name type="common">Mouse-ear cress</name>
    <dbReference type="NCBI Taxonomy" id="3702"/>
    <lineage>
        <taxon>Eukaryota</taxon>
        <taxon>Viridiplantae</taxon>
        <taxon>Streptophyta</taxon>
        <taxon>Embryophyta</taxon>
        <taxon>Tracheophyta</taxon>
        <taxon>Spermatophyta</taxon>
        <taxon>Magnoliopsida</taxon>
        <taxon>eudicotyledons</taxon>
        <taxon>Gunneridae</taxon>
        <taxon>Pentapetalae</taxon>
        <taxon>rosids</taxon>
        <taxon>malvids</taxon>
        <taxon>Brassicales</taxon>
        <taxon>Brassicaceae</taxon>
        <taxon>Camelineae</taxon>
        <taxon>Arabidopsis</taxon>
    </lineage>
</organism>
<protein>
    <recommendedName>
        <fullName>GDSL esterase/lipase At5g03820</fullName>
        <ecNumber>3.1.1.-</ecNumber>
    </recommendedName>
    <alternativeName>
        <fullName>Extracellular lipase At5g03820</fullName>
    </alternativeName>
</protein>
<evidence type="ECO:0000250" key="1"/>
<evidence type="ECO:0000255" key="2"/>
<evidence type="ECO:0000305" key="3"/>
<comment type="subcellular location">
    <subcellularLocation>
        <location evidence="3">Secreted</location>
    </subcellularLocation>
</comment>
<comment type="similarity">
    <text evidence="3">Belongs to the 'GDSL' lipolytic enzyme family.</text>
</comment>
<sequence>MKMFIIMLMTFSVIACFYAGVGTGEPLVPALIIMGDSVVDAGNNNRLNTLIKANFPPYGRDFLAHNATGRFSNGKLATDFTAESLGFTSYPVPYLSQEANGTNLLTGANFASGASGYDDGTAIFYNAITLNQQLKNYKEYQNKVTNIVGSERANKIFSGAIHLLSTGSSDFLQSYYINPILNRIFTPDQYSDRLMKPYSTFVQNLYDLGARKIGVTTLPPLGCLPAAITLFGETGNNNTCVERLNQDAVSFNTKLNNTSMNLTNNLPGLKLVVFDIYNPLLNMAMNPVENGFFESRRACCGTGTVETSFLCNARSVGTCSNATNYVFWDGFHPSEAANRVIANNLLVQGIPLIS</sequence>
<proteinExistence type="inferred from homology"/>
<reference key="1">
    <citation type="journal article" date="1997" name="DNA Res.">
        <title>Structural analysis of Arabidopsis thaliana chromosome 5. I. Sequence features of the 1.6 Mb regions covered by twenty physically assigned P1 clones.</title>
        <authorList>
            <person name="Sato S."/>
            <person name="Kotani H."/>
            <person name="Nakamura Y."/>
            <person name="Kaneko T."/>
            <person name="Asamizu E."/>
            <person name="Fukami M."/>
            <person name="Miyajima N."/>
            <person name="Tabata S."/>
        </authorList>
    </citation>
    <scope>NUCLEOTIDE SEQUENCE [LARGE SCALE GENOMIC DNA]</scope>
    <source>
        <strain>cv. Columbia</strain>
    </source>
</reference>
<reference key="2">
    <citation type="journal article" date="2000" name="Nature">
        <title>Sequence and analysis of chromosome 5 of the plant Arabidopsis thaliana.</title>
        <authorList>
            <person name="Tabata S."/>
            <person name="Kaneko T."/>
            <person name="Nakamura Y."/>
            <person name="Kotani H."/>
            <person name="Kato T."/>
            <person name="Asamizu E."/>
            <person name="Miyajima N."/>
            <person name="Sasamoto S."/>
            <person name="Kimura T."/>
            <person name="Hosouchi T."/>
            <person name="Kawashima K."/>
            <person name="Kohara M."/>
            <person name="Matsumoto M."/>
            <person name="Matsuno A."/>
            <person name="Muraki A."/>
            <person name="Nakayama S."/>
            <person name="Nakazaki N."/>
            <person name="Naruo K."/>
            <person name="Okumura S."/>
            <person name="Shinpo S."/>
            <person name="Takeuchi C."/>
            <person name="Wada T."/>
            <person name="Watanabe A."/>
            <person name="Yamada M."/>
            <person name="Yasuda M."/>
            <person name="Sato S."/>
            <person name="de la Bastide M."/>
            <person name="Huang E."/>
            <person name="Spiegel L."/>
            <person name="Gnoj L."/>
            <person name="O'Shaughnessy A."/>
            <person name="Preston R."/>
            <person name="Habermann K."/>
            <person name="Murray J."/>
            <person name="Johnson D."/>
            <person name="Rohlfing T."/>
            <person name="Nelson J."/>
            <person name="Stoneking T."/>
            <person name="Pepin K."/>
            <person name="Spieth J."/>
            <person name="Sekhon M."/>
            <person name="Armstrong J."/>
            <person name="Becker M."/>
            <person name="Belter E."/>
            <person name="Cordum H."/>
            <person name="Cordes M."/>
            <person name="Courtney L."/>
            <person name="Courtney W."/>
            <person name="Dante M."/>
            <person name="Du H."/>
            <person name="Edwards J."/>
            <person name="Fryman J."/>
            <person name="Haakensen B."/>
            <person name="Lamar E."/>
            <person name="Latreille P."/>
            <person name="Leonard S."/>
            <person name="Meyer R."/>
            <person name="Mulvaney E."/>
            <person name="Ozersky P."/>
            <person name="Riley A."/>
            <person name="Strowmatt C."/>
            <person name="Wagner-McPherson C."/>
            <person name="Wollam A."/>
            <person name="Yoakum M."/>
            <person name="Bell M."/>
            <person name="Dedhia N."/>
            <person name="Parnell L."/>
            <person name="Shah R."/>
            <person name="Rodriguez M."/>
            <person name="Hoon See L."/>
            <person name="Vil D."/>
            <person name="Baker J."/>
            <person name="Kirchoff K."/>
            <person name="Toth K."/>
            <person name="King L."/>
            <person name="Bahret A."/>
            <person name="Miller B."/>
            <person name="Marra M.A."/>
            <person name="Martienssen R."/>
            <person name="McCombie W.R."/>
            <person name="Wilson R.K."/>
            <person name="Murphy G."/>
            <person name="Bancroft I."/>
            <person name="Volckaert G."/>
            <person name="Wambutt R."/>
            <person name="Duesterhoeft A."/>
            <person name="Stiekema W."/>
            <person name="Pohl T."/>
            <person name="Entian K.-D."/>
            <person name="Terryn N."/>
            <person name="Hartley N."/>
            <person name="Bent E."/>
            <person name="Johnson S."/>
            <person name="Langham S.-A."/>
            <person name="McCullagh B."/>
            <person name="Robben J."/>
            <person name="Grymonprez B."/>
            <person name="Zimmermann W."/>
            <person name="Ramsperger U."/>
            <person name="Wedler H."/>
            <person name="Balke K."/>
            <person name="Wedler E."/>
            <person name="Peters S."/>
            <person name="van Staveren M."/>
            <person name="Dirkse W."/>
            <person name="Mooijman P."/>
            <person name="Klein Lankhorst R."/>
            <person name="Weitzenegger T."/>
            <person name="Bothe G."/>
            <person name="Rose M."/>
            <person name="Hauf J."/>
            <person name="Berneiser S."/>
            <person name="Hempel S."/>
            <person name="Feldpausch M."/>
            <person name="Lamberth S."/>
            <person name="Villarroel R."/>
            <person name="Gielen J."/>
            <person name="Ardiles W."/>
            <person name="Bents O."/>
            <person name="Lemcke K."/>
            <person name="Kolesov G."/>
            <person name="Mayer K.F.X."/>
            <person name="Rudd S."/>
            <person name="Schoof H."/>
            <person name="Schueller C."/>
            <person name="Zaccaria P."/>
            <person name="Mewes H.-W."/>
            <person name="Bevan M."/>
            <person name="Fransz P.F."/>
        </authorList>
    </citation>
    <scope>NUCLEOTIDE SEQUENCE [LARGE SCALE GENOMIC DNA]</scope>
    <source>
        <strain>cv. Columbia</strain>
    </source>
</reference>
<reference key="3">
    <citation type="journal article" date="2017" name="Plant J.">
        <title>Araport11: a complete reannotation of the Arabidopsis thaliana reference genome.</title>
        <authorList>
            <person name="Cheng C.Y."/>
            <person name="Krishnakumar V."/>
            <person name="Chan A.P."/>
            <person name="Thibaud-Nissen F."/>
            <person name="Schobel S."/>
            <person name="Town C.D."/>
        </authorList>
    </citation>
    <scope>GENOME REANNOTATION</scope>
    <source>
        <strain>cv. Columbia</strain>
    </source>
</reference>
<reference key="4">
    <citation type="journal article" date="2004" name="Prog. Lipid Res.">
        <title>GDSL family of serine esterases/lipases.</title>
        <authorList>
            <person name="Akoh C.C."/>
            <person name="Lee G.-C."/>
            <person name="Liaw Y.-C."/>
            <person name="Huang T.-H."/>
            <person name="Shaw J.-F."/>
        </authorList>
    </citation>
    <scope>REVIEW</scope>
</reference>
<reference key="5">
    <citation type="journal article" date="2008" name="Pak. J. Biol. Sci.">
        <title>Sequence analysis of GDSL lipase gene family in Arabidopsis thaliana.</title>
        <authorList>
            <person name="Ling H."/>
        </authorList>
    </citation>
    <scope>GENE FAMILY</scope>
</reference>
<gene>
    <name type="ordered locus">At5g03820</name>
    <name type="ORF">F8F6.30</name>
    <name type="ORF">MED24.12</name>
</gene>
<accession>Q9LZC5</accession>
<dbReference type="EC" id="3.1.1.-"/>
<dbReference type="EMBL" id="AB005235">
    <property type="protein sequence ID" value="BAB08608.1"/>
    <property type="molecule type" value="Genomic_DNA"/>
</dbReference>
<dbReference type="EMBL" id="AL162873">
    <property type="protein sequence ID" value="CAB85502.1"/>
    <property type="molecule type" value="Genomic_DNA"/>
</dbReference>
<dbReference type="EMBL" id="CP002688">
    <property type="status" value="NOT_ANNOTATED_CDS"/>
    <property type="molecule type" value="Genomic_DNA"/>
</dbReference>
<dbReference type="PIR" id="T48409">
    <property type="entry name" value="T48409"/>
</dbReference>
<dbReference type="SMR" id="Q9LZC5"/>
<dbReference type="FunCoup" id="Q9LZC5">
    <property type="interactions" value="102"/>
</dbReference>
<dbReference type="STRING" id="3702.Q9LZC5"/>
<dbReference type="GlyGen" id="Q9LZC5">
    <property type="glycosylation" value="7 sites"/>
</dbReference>
<dbReference type="PaxDb" id="3702-AT5G03820.1"/>
<dbReference type="Araport" id="AT5G03820"/>
<dbReference type="TAIR" id="AT5G03820"/>
<dbReference type="eggNOG" id="KOG0017">
    <property type="taxonomic scope" value="Eukaryota"/>
</dbReference>
<dbReference type="HOGENOM" id="CLU_015101_0_1_1"/>
<dbReference type="InParanoid" id="Q9LZC5"/>
<dbReference type="PhylomeDB" id="Q9LZC5"/>
<dbReference type="PRO" id="PR:Q9LZC5"/>
<dbReference type="Proteomes" id="UP000006548">
    <property type="component" value="Chromosome 5"/>
</dbReference>
<dbReference type="ExpressionAtlas" id="Q9LZC5">
    <property type="expression patterns" value="baseline and differential"/>
</dbReference>
<dbReference type="GO" id="GO:0005576">
    <property type="term" value="C:extracellular region"/>
    <property type="evidence" value="ECO:0007669"/>
    <property type="project" value="UniProtKB-SubCell"/>
</dbReference>
<dbReference type="GO" id="GO:0016298">
    <property type="term" value="F:lipase activity"/>
    <property type="evidence" value="ECO:0007669"/>
    <property type="project" value="InterPro"/>
</dbReference>
<dbReference type="GO" id="GO:0016042">
    <property type="term" value="P:lipid catabolic process"/>
    <property type="evidence" value="ECO:0007669"/>
    <property type="project" value="UniProtKB-KW"/>
</dbReference>
<dbReference type="CDD" id="cd01837">
    <property type="entry name" value="SGNH_plant_lipase_like"/>
    <property type="match status" value="1"/>
</dbReference>
<dbReference type="FunFam" id="3.40.50.1110:FF:000003">
    <property type="entry name" value="GDSL esterase/lipase APG"/>
    <property type="match status" value="1"/>
</dbReference>
<dbReference type="Gene3D" id="3.40.50.1110">
    <property type="entry name" value="SGNH hydrolase"/>
    <property type="match status" value="1"/>
</dbReference>
<dbReference type="InterPro" id="IPR001087">
    <property type="entry name" value="GDSL"/>
</dbReference>
<dbReference type="InterPro" id="IPR050592">
    <property type="entry name" value="GDSL_lipolytic_enzyme"/>
</dbReference>
<dbReference type="InterPro" id="IPR008265">
    <property type="entry name" value="Lipase_GDSL_AS"/>
</dbReference>
<dbReference type="InterPro" id="IPR036514">
    <property type="entry name" value="SGNH_hydro_sf"/>
</dbReference>
<dbReference type="InterPro" id="IPR035669">
    <property type="entry name" value="SGNH_plant_lipase-like"/>
</dbReference>
<dbReference type="PANTHER" id="PTHR45642">
    <property type="entry name" value="GDSL ESTERASE/LIPASE EXL3"/>
    <property type="match status" value="1"/>
</dbReference>
<dbReference type="PANTHER" id="PTHR45642:SF103">
    <property type="entry name" value="ZINC FINGER PROTEIN"/>
    <property type="match status" value="1"/>
</dbReference>
<dbReference type="Pfam" id="PF00657">
    <property type="entry name" value="Lipase_GDSL"/>
    <property type="match status" value="1"/>
</dbReference>
<dbReference type="SUPFAM" id="SSF52266">
    <property type="entry name" value="SGNH hydrolase"/>
    <property type="match status" value="1"/>
</dbReference>
<dbReference type="PROSITE" id="PS01098">
    <property type="entry name" value="LIPASE_GDSL_SER"/>
    <property type="match status" value="1"/>
</dbReference>
<name>GDL73_ARATH</name>
<keyword id="KW-0325">Glycoprotein</keyword>
<keyword id="KW-0378">Hydrolase</keyword>
<keyword id="KW-0442">Lipid degradation</keyword>
<keyword id="KW-0443">Lipid metabolism</keyword>
<keyword id="KW-1185">Reference proteome</keyword>
<keyword id="KW-0964">Secreted</keyword>
<keyword id="KW-0732">Signal</keyword>
<feature type="signal peptide" evidence="2">
    <location>
        <begin position="1"/>
        <end position="24"/>
    </location>
</feature>
<feature type="chain" id="PRO_0000367413" description="GDSL esterase/lipase At5g03820">
    <location>
        <begin position="25"/>
        <end position="354"/>
    </location>
</feature>
<feature type="active site" description="Nucleophile" evidence="1">
    <location>
        <position position="37"/>
    </location>
</feature>
<feature type="active site" evidence="1">
    <location>
        <position position="329"/>
    </location>
</feature>
<feature type="active site" evidence="1">
    <location>
        <position position="332"/>
    </location>
</feature>
<feature type="glycosylation site" description="N-linked (GlcNAc...) asparagine" evidence="2">
    <location>
        <position position="66"/>
    </location>
</feature>
<feature type="glycosylation site" description="N-linked (GlcNAc...) asparagine" evidence="2">
    <location>
        <position position="100"/>
    </location>
</feature>
<feature type="glycosylation site" description="N-linked (GlcNAc...) asparagine" evidence="2">
    <location>
        <position position="237"/>
    </location>
</feature>
<feature type="glycosylation site" description="N-linked (GlcNAc...) asparagine" evidence="2">
    <location>
        <position position="256"/>
    </location>
</feature>
<feature type="glycosylation site" description="N-linked (GlcNAc...) asparagine" evidence="2">
    <location>
        <position position="257"/>
    </location>
</feature>
<feature type="glycosylation site" description="N-linked (GlcNAc...) asparagine" evidence="2">
    <location>
        <position position="261"/>
    </location>
</feature>
<feature type="glycosylation site" description="N-linked (GlcNAc...) asparagine" evidence="2">
    <location>
        <position position="321"/>
    </location>
</feature>